<feature type="chain" id="PRO_0000080728" description="Uncharacterized ATP-dependent helicase MG140">
    <location>
        <begin position="1"/>
        <end position="1113"/>
    </location>
</feature>
<feature type="binding site" evidence="1">
    <location>
        <begin position="313"/>
        <end position="320"/>
    </location>
    <ligand>
        <name>ATP</name>
        <dbReference type="ChEBI" id="CHEBI:30616"/>
    </ligand>
</feature>
<feature type="sequence conflict" description="In Ref. 2 and 3." evidence="2" ref="2 3">
    <original>D</original>
    <variation>R</variation>
    <location>
        <position position="267"/>
    </location>
</feature>
<feature type="sequence conflict" description="In Ref. 3." evidence="2" ref="3">
    <original>L</original>
    <variation>W</variation>
    <location>
        <position position="394"/>
    </location>
</feature>
<feature type="sequence conflict" description="In Ref. 3." evidence="2" ref="3">
    <original>PIGVISKIR</original>
    <variation>QLGWFLKSD</variation>
    <location>
        <begin position="1092"/>
        <end position="1100"/>
    </location>
</feature>
<protein>
    <recommendedName>
        <fullName>Uncharacterized ATP-dependent helicase MG140</fullName>
        <ecNumber>3.6.4.-</ecNumber>
    </recommendedName>
</protein>
<dbReference type="EC" id="3.6.4.-"/>
<dbReference type="EMBL" id="L43967">
    <property type="protein sequence ID" value="AAC71358.1"/>
    <property type="molecule type" value="Genomic_DNA"/>
</dbReference>
<dbReference type="EMBL" id="X61512">
    <property type="protein sequence ID" value="CAA43726.1"/>
    <property type="molecule type" value="Genomic_DNA"/>
</dbReference>
<dbReference type="EMBL" id="U01729">
    <property type="protein sequence ID" value="AAC43207.1"/>
    <property type="molecule type" value="Unassigned_DNA"/>
</dbReference>
<dbReference type="EMBL" id="U01742">
    <property type="protein sequence ID" value="AAD10552.1"/>
    <property type="molecule type" value="Genomic_DNA"/>
</dbReference>
<dbReference type="EMBL" id="U02156">
    <property type="protein sequence ID" value="AAD12438.1"/>
    <property type="molecule type" value="Genomic_DNA"/>
</dbReference>
<dbReference type="PIR" id="E64215">
    <property type="entry name" value="E64215"/>
</dbReference>
<dbReference type="RefSeq" id="WP_010869351.1">
    <property type="nucleotide sequence ID" value="NC_000908.2"/>
</dbReference>
<dbReference type="STRING" id="243273.MG_140"/>
<dbReference type="GeneID" id="88282271"/>
<dbReference type="KEGG" id="mge:MG_140"/>
<dbReference type="eggNOG" id="COG1112">
    <property type="taxonomic scope" value="Bacteria"/>
</dbReference>
<dbReference type="HOGENOM" id="CLU_000788_4_0_14"/>
<dbReference type="InParanoid" id="P47386"/>
<dbReference type="OrthoDB" id="9757917at2"/>
<dbReference type="BioCyc" id="MGEN243273:G1GJ2-162-MONOMER"/>
<dbReference type="Proteomes" id="UP000000807">
    <property type="component" value="Chromosome"/>
</dbReference>
<dbReference type="GO" id="GO:0005524">
    <property type="term" value="F:ATP binding"/>
    <property type="evidence" value="ECO:0007669"/>
    <property type="project" value="UniProtKB-KW"/>
</dbReference>
<dbReference type="GO" id="GO:0004386">
    <property type="term" value="F:helicase activity"/>
    <property type="evidence" value="ECO:0007669"/>
    <property type="project" value="UniProtKB-KW"/>
</dbReference>
<dbReference type="GO" id="GO:0016787">
    <property type="term" value="F:hydrolase activity"/>
    <property type="evidence" value="ECO:0007669"/>
    <property type="project" value="UniProtKB-KW"/>
</dbReference>
<dbReference type="CDD" id="cd18808">
    <property type="entry name" value="SF1_C_Upf1"/>
    <property type="match status" value="1"/>
</dbReference>
<dbReference type="FunFam" id="3.40.50.300:FF:002063">
    <property type="entry name" value="DNA helicase related protein"/>
    <property type="match status" value="1"/>
</dbReference>
<dbReference type="FunFam" id="3.40.50.300:FF:006147">
    <property type="entry name" value="Uncharacterized ATP-dependent helicase MG140"/>
    <property type="match status" value="1"/>
</dbReference>
<dbReference type="Gene3D" id="3.40.50.300">
    <property type="entry name" value="P-loop containing nucleotide triphosphate hydrolases"/>
    <property type="match status" value="2"/>
</dbReference>
<dbReference type="InterPro" id="IPR045055">
    <property type="entry name" value="DNA2/NAM7-like"/>
</dbReference>
<dbReference type="InterPro" id="IPR041679">
    <property type="entry name" value="DNA2/NAM7-like_C"/>
</dbReference>
<dbReference type="InterPro" id="IPR041677">
    <property type="entry name" value="DNA2/NAM7_AAA_11"/>
</dbReference>
<dbReference type="InterPro" id="IPR025103">
    <property type="entry name" value="DUF4011"/>
</dbReference>
<dbReference type="InterPro" id="IPR027417">
    <property type="entry name" value="P-loop_NTPase"/>
</dbReference>
<dbReference type="InterPro" id="IPR047187">
    <property type="entry name" value="SF1_C_Upf1"/>
</dbReference>
<dbReference type="PANTHER" id="PTHR10887">
    <property type="entry name" value="DNA2/NAM7 HELICASE FAMILY"/>
    <property type="match status" value="1"/>
</dbReference>
<dbReference type="Pfam" id="PF13086">
    <property type="entry name" value="AAA_11"/>
    <property type="match status" value="2"/>
</dbReference>
<dbReference type="Pfam" id="PF13087">
    <property type="entry name" value="AAA_12"/>
    <property type="match status" value="1"/>
</dbReference>
<dbReference type="Pfam" id="PF13195">
    <property type="entry name" value="DUF4011"/>
    <property type="match status" value="1"/>
</dbReference>
<dbReference type="SUPFAM" id="SSF52540">
    <property type="entry name" value="P-loop containing nucleoside triphosphate hydrolases"/>
    <property type="match status" value="2"/>
</dbReference>
<accession>P47386</accession>
<accession>Q49203</accession>
<accession>Q49283</accession>
<accession>Q49445</accession>
<accession>Q49472</accession>
<proteinExistence type="inferred from homology"/>
<comment type="similarity">
    <text evidence="2">Belongs to the DNA2/NAM7 helicase family.</text>
</comment>
<keyword id="KW-0067">ATP-binding</keyword>
<keyword id="KW-0347">Helicase</keyword>
<keyword id="KW-0378">Hydrolase</keyword>
<keyword id="KW-0547">Nucleotide-binding</keyword>
<keyword id="KW-1185">Reference proteome</keyword>
<name>Y140_MYCGE</name>
<evidence type="ECO:0000255" key="1"/>
<evidence type="ECO:0000305" key="2"/>
<gene>
    <name type="ordered locus">MG140</name>
</gene>
<reference key="1">
    <citation type="journal article" date="1995" name="Science">
        <title>The minimal gene complement of Mycoplasma genitalium.</title>
        <authorList>
            <person name="Fraser C.M."/>
            <person name="Gocayne J.D."/>
            <person name="White O."/>
            <person name="Adams M.D."/>
            <person name="Clayton R.A."/>
            <person name="Fleischmann R.D."/>
            <person name="Bult C.J."/>
            <person name="Kerlavage A.R."/>
            <person name="Sutton G.G."/>
            <person name="Kelley J.M."/>
            <person name="Fritchman J.L."/>
            <person name="Weidman J.F."/>
            <person name="Small K.V."/>
            <person name="Sandusky M."/>
            <person name="Fuhrmann J.L."/>
            <person name="Nguyen D.T."/>
            <person name="Utterback T.R."/>
            <person name="Saudek D.M."/>
            <person name="Phillips C.A."/>
            <person name="Merrick J.M."/>
            <person name="Tomb J.-F."/>
            <person name="Dougherty B.A."/>
            <person name="Bott K.F."/>
            <person name="Hu P.-C."/>
            <person name="Lucier T.S."/>
            <person name="Peterson S.N."/>
            <person name="Smith H.O."/>
            <person name="Hutchison C.A. III"/>
            <person name="Venter J.C."/>
        </authorList>
    </citation>
    <scope>NUCLEOTIDE SEQUENCE [LARGE SCALE GENOMIC DNA]</scope>
    <source>
        <strain>ATCC 33530 / DSM 19775 / NCTC 10195 / G37</strain>
    </source>
</reference>
<reference key="2">
    <citation type="journal article" date="1991" name="Nucleic Acids Res.">
        <title>A random sequencing approach for placing markers on the physical map of Mycoplasma genitalium.</title>
        <authorList>
            <person name="Peterson S.N."/>
            <person name="Schramm N."/>
            <person name="Hu P.-C."/>
            <person name="Bott K.F."/>
            <person name="Hutchison C.A. III"/>
        </authorList>
    </citation>
    <scope>NUCLEOTIDE SEQUENCE [GENOMIC DNA] OF 206-267</scope>
    <source>
        <strain>ATCC 33530 / DSM 19775 / NCTC 10195 / G37</strain>
    </source>
</reference>
<reference key="3">
    <citation type="journal article" date="1993" name="J. Bacteriol.">
        <title>A survey of the Mycoplasma genitalium genome by using random sequencing.</title>
        <authorList>
            <person name="Peterson S.N."/>
            <person name="Hu P.-C."/>
            <person name="Bott K.F."/>
            <person name="Hutchison C.A. III"/>
        </authorList>
    </citation>
    <scope>NUCLEOTIDE SEQUENCE [GENOMIC DNA] OF 128-267; 294-394 AND 999-1100</scope>
    <source>
        <strain>ATCC 33530 / DSM 19775 / NCTC 10195 / G37</strain>
    </source>
</reference>
<sequence length="1113" mass="130580">MNDWQWLKNRLVNSKTKSVSFWLPQTSSNIIDIAELIKCCSELKNTSINGLIDFLNQQDKLEFNLTRLKEIDVEDGKQLFGIETSVYKHFQNEIARFYKQVNKHFRETGSESLFLALPVIEGINEFNDIFRAPLLYVGVKLKVSPRFERFWLEINKEEIFLNPTIIGVETNKRNSLFKNNYDTTKIDVNDALKVFSELEYEFRMPLTSELKSFSKKAKSDFNTEKRTNYLINNVLLGIFDVKGDQLFQNFNEILNTDPDVLDELLKDRRDLLLENREFREQFDLKDTYLFSHLDIYQQYAVKQALLGDLIIEGPPGTGKSETIVNILVNLVLNNKKVLFVSEKVTALDVVYNRLGSFKHIALFNASVAAEKKRFYNQFAEFETYFTTYFSKKDLDATLPTFEGKWVDDILGAFQALQALYDTKINSGENLFSFKEIVSSFQMLDASYIKIKEYERFDEWVRVFSNPLWLEKHLSYQELKKELSQRWNGIDNFYQLQSLLNQTKKRKVLNYVLEHFEQFNTVISPKHVLFYKPSNKSQLLLKQLKQDVEQYTSLQRFQSPTKFETIKLNFINQVNENPTPWFFSWFIQFHAKPLLEKLVSFESNIIKTKQAYLNGIESYVASCKKLLKTTILNNFFQLYQTNKDELLEICRQAKNPVLKEITWWFKKHFELLKKLFPVHIMTLESAATLTPNQRGLYDYVVIDEASQVFLERAIPILFRADKYIIAGDTKQLKPANFFQSRAEYDVDEEFEDGNIEAAVHSSSLLHFLKNRSRILTLLKFHYRSDSADLIAFTNNRIYDNELIFMNKANADQRVFIVHDVIDGIWKNNRNLQEARDVVQRLEQLTTTNDYKKSLGVICFNKNQADLIEYLIDKQNNPLLNEWRERQNDVGEYEGLFVKNIENVQGDERDIIIFSLGYDRSVNSYGPISKQGGENRLNVAITRAKQRIELFKTNRGEDYNGLSSSSLGSKLLVEYLLYCEAMAKNQGEKITFQAVKRKETKAKYELAVENDFFNQLQAIFGGEFEIKRNVNEGAYFFSFVFYFNNIPYLAIDFNIPIPTSRKQVMEGILYREQFLKKRQWNLINIWIDEWKLNPIGVISKIRSSLAVHQNQHEEI</sequence>
<organism>
    <name type="scientific">Mycoplasma genitalium (strain ATCC 33530 / DSM 19775 / NCTC 10195 / G37)</name>
    <name type="common">Mycoplasmoides genitalium</name>
    <dbReference type="NCBI Taxonomy" id="243273"/>
    <lineage>
        <taxon>Bacteria</taxon>
        <taxon>Bacillati</taxon>
        <taxon>Mycoplasmatota</taxon>
        <taxon>Mycoplasmoidales</taxon>
        <taxon>Mycoplasmoidaceae</taxon>
        <taxon>Mycoplasmoides</taxon>
    </lineage>
</organism>